<name>SL9A1_PIG</name>
<organism>
    <name type="scientific">Sus scrofa</name>
    <name type="common">Pig</name>
    <dbReference type="NCBI Taxonomy" id="9823"/>
    <lineage>
        <taxon>Eukaryota</taxon>
        <taxon>Metazoa</taxon>
        <taxon>Chordata</taxon>
        <taxon>Craniata</taxon>
        <taxon>Vertebrata</taxon>
        <taxon>Euteleostomi</taxon>
        <taxon>Mammalia</taxon>
        <taxon>Eutheria</taxon>
        <taxon>Laurasiatheria</taxon>
        <taxon>Artiodactyla</taxon>
        <taxon>Suina</taxon>
        <taxon>Suidae</taxon>
        <taxon>Sus</taxon>
    </lineage>
</organism>
<proteinExistence type="evidence at transcript level"/>
<feature type="chain" id="PRO_0000052349" description="Sodium/hydrogen exchanger 1">
    <location>
        <begin position="1"/>
        <end position="818"/>
    </location>
</feature>
<feature type="topological domain" description="Extracellular" evidence="8">
    <location>
        <begin position="1"/>
        <end position="98"/>
    </location>
</feature>
<feature type="transmembrane region" description="Helical; Name=1" evidence="2">
    <location>
        <begin position="99"/>
        <end position="121"/>
    </location>
</feature>
<feature type="topological domain" description="Cytoplasmic" evidence="8">
    <location>
        <begin position="122"/>
        <end position="130"/>
    </location>
</feature>
<feature type="transmembrane region" description="Helical; Name=2" evidence="2">
    <location>
        <begin position="131"/>
        <end position="148"/>
    </location>
</feature>
<feature type="topological domain" description="Extracellular" evidence="8">
    <location>
        <begin position="149"/>
        <end position="158"/>
    </location>
</feature>
<feature type="transmembrane region" description="Helical; Name=3" evidence="2">
    <location>
        <begin position="159"/>
        <end position="176"/>
    </location>
</feature>
<feature type="topological domain" description="Cytoplasmic" evidence="8">
    <location>
        <begin position="177"/>
        <end position="186"/>
    </location>
</feature>
<feature type="transmembrane region" description="Helical; Name=4" evidence="2">
    <location>
        <begin position="187"/>
        <end position="215"/>
    </location>
</feature>
<feature type="topological domain" description="Extracellular" evidence="8">
    <location>
        <begin position="216"/>
        <end position="222"/>
    </location>
</feature>
<feature type="transmembrane region" description="Helical; Name=5" evidence="2">
    <location>
        <begin position="223"/>
        <end position="249"/>
    </location>
</feature>
<feature type="topological domain" description="Cytoplasmic" evidence="8">
    <location>
        <begin position="250"/>
        <end position="252"/>
    </location>
</feature>
<feature type="transmembrane region" description="Helical; Name=6" evidence="2">
    <location>
        <begin position="253"/>
        <end position="283"/>
    </location>
</feature>
<feature type="topological domain" description="Extracellular" evidence="8">
    <location>
        <begin position="284"/>
        <end position="287"/>
    </location>
</feature>
<feature type="transmembrane region" description="Helical; Name=7" evidence="2">
    <location>
        <begin position="288"/>
        <end position="322"/>
    </location>
</feature>
<feature type="topological domain" description="Cytoplasmic" evidence="8">
    <location>
        <begin position="323"/>
        <end position="328"/>
    </location>
</feature>
<feature type="transmembrane region" description="Helical; Name=8" evidence="2">
    <location>
        <begin position="329"/>
        <end position="341"/>
    </location>
</feature>
<feature type="topological domain" description="Extracellular" evidence="8">
    <location>
        <begin position="342"/>
        <end position="350"/>
    </location>
</feature>
<feature type="transmembrane region" description="Helical; Name=9" evidence="2">
    <location>
        <begin position="351"/>
        <end position="371"/>
    </location>
</feature>
<feature type="topological domain" description="Cytoplasmic" evidence="8">
    <location>
        <begin position="372"/>
        <end position="373"/>
    </location>
</feature>
<feature type="transmembrane region" description="Helical; Name=10" evidence="2">
    <location>
        <begin position="374"/>
        <end position="404"/>
    </location>
</feature>
<feature type="topological domain" description="Extracellular" evidence="8">
    <location>
        <begin position="405"/>
        <end position="410"/>
    </location>
</feature>
<feature type="transmembrane region" description="Helical; Name=11" evidence="2">
    <location>
        <begin position="411"/>
        <end position="438"/>
    </location>
</feature>
<feature type="topological domain" description="Cytoplasmic" evidence="8">
    <location>
        <begin position="439"/>
        <end position="444"/>
    </location>
</feature>
<feature type="transmembrane region" description="Helical; Name=12" evidence="2">
    <location>
        <begin position="445"/>
        <end position="469"/>
    </location>
</feature>
<feature type="topological domain" description="Extracellular" evidence="8">
    <location>
        <begin position="470"/>
        <end position="475"/>
    </location>
</feature>
<feature type="transmembrane region" description="Helical; Name=13" evidence="2">
    <location>
        <begin position="476"/>
        <end position="505"/>
    </location>
</feature>
<feature type="topological domain" description="Cytoplasmic" evidence="8">
    <location>
        <begin position="506"/>
        <end position="818"/>
    </location>
</feature>
<feature type="region of interest" description="Disordered" evidence="6">
    <location>
        <begin position="39"/>
        <end position="76"/>
    </location>
</feature>
<feature type="region of interest" description="Interaction with TESC" evidence="2">
    <location>
        <begin position="503"/>
        <end position="545"/>
    </location>
</feature>
<feature type="region of interest" description="PI(4,5)P2-binding region" evidence="3">
    <location>
        <begin position="509"/>
        <end position="516"/>
    </location>
</feature>
<feature type="region of interest" description="Interaction with CHP2" evidence="2">
    <location>
        <begin position="515"/>
        <end position="545"/>
    </location>
</feature>
<feature type="region of interest" description="Confers pH-dependent PI(4,5)P2 binding" evidence="2">
    <location>
        <begin position="540"/>
        <end position="545"/>
    </location>
</feature>
<feature type="region of interest" description="PI(4,5)P2-binding region" evidence="3">
    <location>
        <begin position="552"/>
        <end position="560"/>
    </location>
</feature>
<feature type="region of interest" description="Interaction with CALM1" evidence="2">
    <location>
        <begin position="633"/>
        <end position="818"/>
    </location>
</feature>
<feature type="region of interest" description="Interaction with TESC" evidence="2">
    <location>
        <begin position="633"/>
        <end position="818"/>
    </location>
</feature>
<feature type="region of interest" description="Interaction with PPP3CA" evidence="2">
    <location>
        <begin position="684"/>
        <end position="687"/>
    </location>
</feature>
<feature type="region of interest" description="Interaction with PPP3CA" evidence="2">
    <location>
        <begin position="715"/>
        <end position="720"/>
    </location>
</feature>
<feature type="region of interest" description="Disordered" evidence="6">
    <location>
        <begin position="739"/>
        <end position="818"/>
    </location>
</feature>
<feature type="compositionally biased region" description="Polar residues" evidence="6">
    <location>
        <begin position="785"/>
        <end position="794"/>
    </location>
</feature>
<feature type="site" description="Channel pore-lining" evidence="1">
    <location>
        <position position="161"/>
    </location>
</feature>
<feature type="modified residue" description="Phosphoserine" evidence="2">
    <location>
        <position position="599"/>
    </location>
</feature>
<feature type="modified residue" description="Phosphoserine" evidence="2">
    <location>
        <position position="602"/>
    </location>
</feature>
<feature type="modified residue" description="Phosphothreonine" evidence="4">
    <location>
        <position position="603"/>
    </location>
</feature>
<feature type="modified residue" description="Phosphoserine" evidence="2">
    <location>
        <position position="605"/>
    </location>
</feature>
<feature type="modified residue" description="Phosphoserine" evidence="2">
    <location>
        <position position="648"/>
    </location>
</feature>
<feature type="modified residue" description="Phosphoserine" evidence="2">
    <location>
        <position position="693"/>
    </location>
</feature>
<feature type="modified residue" description="Phosphoserine" evidence="2">
    <location>
        <position position="697"/>
    </location>
</feature>
<feature type="modified residue" description="Phosphoserine" evidence="2">
    <location>
        <position position="703"/>
    </location>
</feature>
<feature type="modified residue" description="Phosphoserine" evidence="2">
    <location>
        <position position="723"/>
    </location>
</feature>
<feature type="modified residue" description="Phosphoserine" evidence="2">
    <location>
        <position position="726"/>
    </location>
</feature>
<feature type="modified residue" description="Phosphoserine" evidence="2">
    <location>
        <position position="729"/>
    </location>
</feature>
<feature type="modified residue" description="Phosphothreonine" evidence="4">
    <location>
        <position position="752"/>
    </location>
</feature>
<feature type="modified residue" description="Phosphothreonine" evidence="2">
    <location>
        <position position="782"/>
    </location>
</feature>
<feature type="modified residue" description="Phosphoserine" evidence="2">
    <location>
        <position position="788"/>
    </location>
</feature>
<feature type="modified residue" description="Phosphoserine" evidence="4">
    <location>
        <position position="790"/>
    </location>
</feature>
<feature type="modified residue" description="Phosphoserine" evidence="3">
    <location>
        <position position="799"/>
    </location>
</feature>
<feature type="glycosylation site" description="N-linked (GlcNAc...) asparagine" evidence="5">
    <location>
        <position position="75"/>
    </location>
</feature>
<feature type="sequence conflict" description="In Ref. 1; AAB20633." evidence="8" ref="1">
    <original>H</original>
    <variation>Y</variation>
    <location>
        <position position="683"/>
    </location>
</feature>
<accession>P48762</accession>
<protein>
    <recommendedName>
        <fullName>Sodium/hydrogen exchanger 1</fullName>
    </recommendedName>
    <alternativeName>
        <fullName>Na(+)/H(+) exchanger 1</fullName>
        <shortName>NHE-1</shortName>
    </alternativeName>
    <alternativeName>
        <fullName>Solute carrier family 9 member 1</fullName>
    </alternativeName>
</protein>
<reference key="1">
    <citation type="journal article" date="1991" name="Am. J. Physiol.">
        <title>cDNA cloning and immunolocalization of a Na(+)-H+ exchanger in LLC-PK1 renal epithelial cells.</title>
        <authorList>
            <person name="Reilly R.F."/>
            <person name="Hildebrandt F."/>
            <person name="Biemesderfer D."/>
            <person name="Sardet C."/>
            <person name="Pouyssegur J."/>
            <person name="Aronson P.S."/>
            <person name="Slayman C.W."/>
            <person name="Igarashi P."/>
        </authorList>
    </citation>
    <scope>NUCLEOTIDE SEQUENCE [MRNA]</scope>
    <scope>SUBCELLULAR LOCATION</scope>
</reference>
<dbReference type="EMBL" id="M89631">
    <property type="protein sequence ID" value="AAA31092.1"/>
    <property type="molecule type" value="mRNA"/>
</dbReference>
<dbReference type="EMBL" id="S71135">
    <property type="protein sequence ID" value="AAB20633.1"/>
    <property type="molecule type" value="mRNA"/>
</dbReference>
<dbReference type="PIR" id="A48858">
    <property type="entry name" value="A48858"/>
</dbReference>
<dbReference type="RefSeq" id="NP_001007104.1">
    <property type="nucleotide sequence ID" value="NM_001007103.1"/>
</dbReference>
<dbReference type="BMRB" id="P48762"/>
<dbReference type="SMR" id="P48762"/>
<dbReference type="FunCoup" id="P48762">
    <property type="interactions" value="560"/>
</dbReference>
<dbReference type="STRING" id="9823.ENSSSCP00000003872"/>
<dbReference type="GlyCosmos" id="P48762">
    <property type="glycosylation" value="2 sites, No reported glycans"/>
</dbReference>
<dbReference type="GlyGen" id="P48762">
    <property type="glycosylation" value="2 sites"/>
</dbReference>
<dbReference type="PaxDb" id="9823-ENSSSCP00000003872"/>
<dbReference type="PeptideAtlas" id="P48762"/>
<dbReference type="GeneID" id="397458"/>
<dbReference type="KEGG" id="ssc:397458"/>
<dbReference type="CTD" id="6548"/>
<dbReference type="eggNOG" id="KOG1966">
    <property type="taxonomic scope" value="Eukaryota"/>
</dbReference>
<dbReference type="InParanoid" id="P48762"/>
<dbReference type="OrthoDB" id="196264at2759"/>
<dbReference type="Proteomes" id="UP000008227">
    <property type="component" value="Unplaced"/>
</dbReference>
<dbReference type="Proteomes" id="UP000314985">
    <property type="component" value="Unplaced"/>
</dbReference>
<dbReference type="Proteomes" id="UP000694570">
    <property type="component" value="Unplaced"/>
</dbReference>
<dbReference type="Proteomes" id="UP000694571">
    <property type="component" value="Unplaced"/>
</dbReference>
<dbReference type="Proteomes" id="UP000694720">
    <property type="component" value="Unplaced"/>
</dbReference>
<dbReference type="Proteomes" id="UP000694722">
    <property type="component" value="Unplaced"/>
</dbReference>
<dbReference type="Proteomes" id="UP000694723">
    <property type="component" value="Unplaced"/>
</dbReference>
<dbReference type="Proteomes" id="UP000694724">
    <property type="component" value="Unplaced"/>
</dbReference>
<dbReference type="Proteomes" id="UP000694725">
    <property type="component" value="Unplaced"/>
</dbReference>
<dbReference type="Proteomes" id="UP000694726">
    <property type="component" value="Unplaced"/>
</dbReference>
<dbReference type="Proteomes" id="UP000694727">
    <property type="component" value="Unplaced"/>
</dbReference>
<dbReference type="Proteomes" id="UP000694728">
    <property type="component" value="Unplaced"/>
</dbReference>
<dbReference type="GO" id="GO:0016323">
    <property type="term" value="C:basolateral plasma membrane"/>
    <property type="evidence" value="ECO:0000314"/>
    <property type="project" value="UniProtKB"/>
</dbReference>
<dbReference type="GO" id="GO:0005737">
    <property type="term" value="C:cytoplasm"/>
    <property type="evidence" value="ECO:0000250"/>
    <property type="project" value="UniProtKB"/>
</dbReference>
<dbReference type="GO" id="GO:0005886">
    <property type="term" value="C:plasma membrane"/>
    <property type="evidence" value="ECO:0000250"/>
    <property type="project" value="UniProtKB"/>
</dbReference>
<dbReference type="GO" id="GO:0048306">
    <property type="term" value="F:calcium-dependent protein binding"/>
    <property type="evidence" value="ECO:0000250"/>
    <property type="project" value="UniProtKB"/>
</dbReference>
<dbReference type="GO" id="GO:0005516">
    <property type="term" value="F:calmodulin binding"/>
    <property type="evidence" value="ECO:0007669"/>
    <property type="project" value="UniProtKB-KW"/>
</dbReference>
<dbReference type="GO" id="GO:0015386">
    <property type="term" value="F:potassium:proton antiporter activity"/>
    <property type="evidence" value="ECO:0000318"/>
    <property type="project" value="GO_Central"/>
</dbReference>
<dbReference type="GO" id="GO:0015385">
    <property type="term" value="F:sodium:proton antiporter activity"/>
    <property type="evidence" value="ECO:0000250"/>
    <property type="project" value="UniProtKB"/>
</dbReference>
<dbReference type="GO" id="GO:0071468">
    <property type="term" value="P:cellular response to acidic pH"/>
    <property type="evidence" value="ECO:0000250"/>
    <property type="project" value="UniProtKB"/>
</dbReference>
<dbReference type="GO" id="GO:0071805">
    <property type="term" value="P:potassium ion transmembrane transport"/>
    <property type="evidence" value="ECO:0000318"/>
    <property type="project" value="GO_Central"/>
</dbReference>
<dbReference type="GO" id="GO:0051259">
    <property type="term" value="P:protein complex oligomerization"/>
    <property type="evidence" value="ECO:0000250"/>
    <property type="project" value="UniProtKB"/>
</dbReference>
<dbReference type="GO" id="GO:0051453">
    <property type="term" value="P:regulation of intracellular pH"/>
    <property type="evidence" value="ECO:0000250"/>
    <property type="project" value="UniProtKB"/>
</dbReference>
<dbReference type="GO" id="GO:0006885">
    <property type="term" value="P:regulation of pH"/>
    <property type="evidence" value="ECO:0000250"/>
    <property type="project" value="UniProtKB"/>
</dbReference>
<dbReference type="GO" id="GO:0010447">
    <property type="term" value="P:response to acidic pH"/>
    <property type="evidence" value="ECO:0000250"/>
    <property type="project" value="UniProtKB"/>
</dbReference>
<dbReference type="GO" id="GO:0036376">
    <property type="term" value="P:sodium ion export across plasma membrane"/>
    <property type="evidence" value="ECO:0000250"/>
    <property type="project" value="UniProtKB"/>
</dbReference>
<dbReference type="GO" id="GO:0098719">
    <property type="term" value="P:sodium ion import across plasma membrane"/>
    <property type="evidence" value="ECO:0000318"/>
    <property type="project" value="GO_Central"/>
</dbReference>
<dbReference type="Gene3D" id="6.10.140.1330">
    <property type="match status" value="1"/>
</dbReference>
<dbReference type="Gene3D" id="6.10.250.1040">
    <property type="match status" value="1"/>
</dbReference>
<dbReference type="Gene3D" id="6.10.250.2020">
    <property type="match status" value="1"/>
</dbReference>
<dbReference type="InterPro" id="IPR018422">
    <property type="entry name" value="Cation/H_exchanger_CPA1"/>
</dbReference>
<dbReference type="InterPro" id="IPR006153">
    <property type="entry name" value="Cation/H_exchanger_TM"/>
</dbReference>
<dbReference type="InterPro" id="IPR004709">
    <property type="entry name" value="NaH_exchanger"/>
</dbReference>
<dbReference type="InterPro" id="IPR001970">
    <property type="entry name" value="NHE-1-like"/>
</dbReference>
<dbReference type="InterPro" id="IPR032103">
    <property type="entry name" value="NHE_CaM-bd"/>
</dbReference>
<dbReference type="NCBIfam" id="TIGR00840">
    <property type="entry name" value="b_cpa1"/>
    <property type="match status" value="1"/>
</dbReference>
<dbReference type="PANTHER" id="PTHR10110">
    <property type="entry name" value="SODIUM/HYDROGEN EXCHANGER"/>
    <property type="match status" value="1"/>
</dbReference>
<dbReference type="PANTHER" id="PTHR10110:SF59">
    <property type="entry name" value="SODIUM_HYDROGEN EXCHANGER 1"/>
    <property type="match status" value="1"/>
</dbReference>
<dbReference type="Pfam" id="PF00999">
    <property type="entry name" value="Na_H_Exchanger"/>
    <property type="match status" value="1"/>
</dbReference>
<dbReference type="Pfam" id="PF16644">
    <property type="entry name" value="NEXCaM_BD"/>
    <property type="match status" value="1"/>
</dbReference>
<dbReference type="PRINTS" id="PR01084">
    <property type="entry name" value="NAHEXCHNGR"/>
</dbReference>
<dbReference type="PRINTS" id="PR01085">
    <property type="entry name" value="NAHEXCHNGR1"/>
</dbReference>
<comment type="function">
    <text evidence="2 3">Electroneutral Na(+) /H(+) antiporter that extrudes Na(+) in exchange for external protons driven by the inward sodium ion chemical gradient, protecting cells from acidification that occurs from metabolism (By similarity). Exchanges intracellular H(+) ions for extracellular Na(+) in 1:1 stoichiometry (By similarity). Plays a key role in maintening intracellular pH neutral and cell volume, and thus is important for cell growth, proliferation, migration and survival. In addition, can transport lithium Li(+) and also functions as a Na(+)/Li(+) antiporter. SLC9A1 also functions in membrane anchoring and organization of scaffolding complexes that coordinate signaling inputs (By similarity).</text>
</comment>
<comment type="catalytic activity">
    <reaction evidence="2">
        <text>Na(+)(in) + H(+)(out) = Na(+)(out) + H(+)(in)</text>
        <dbReference type="Rhea" id="RHEA:29419"/>
        <dbReference type="ChEBI" id="CHEBI:15378"/>
        <dbReference type="ChEBI" id="CHEBI:29101"/>
    </reaction>
</comment>
<comment type="catalytic activity">
    <reaction evidence="2">
        <text>Li(+)(out) + H(+)(in) = Li(+)(in) + H(+)(out)</text>
        <dbReference type="Rhea" id="RHEA:72407"/>
        <dbReference type="ChEBI" id="CHEBI:15378"/>
        <dbReference type="ChEBI" id="CHEBI:49713"/>
    </reaction>
</comment>
<comment type="catalytic activity">
    <reaction evidence="2">
        <text>Li(+)(in) + Na(+)(out) = Li(+)(out) + Na(+)(in)</text>
        <dbReference type="Rhea" id="RHEA:72415"/>
        <dbReference type="ChEBI" id="CHEBI:29101"/>
        <dbReference type="ChEBI" id="CHEBI:49713"/>
    </reaction>
</comment>
<comment type="activity regulation">
    <text evidence="2">Activated at acidic pHs. Inhibited by cariporide and eniporide. Inhibited by amiloride and 5-amino-substituted derivatives. Phosphatidylinositol 4,5-bisphosphate (PI(4,5)P2) and phosphatidylinositol 3,4,5-trisphosphate (PI(3,4,5)P3) bind and differentially regulate SLC9A1 activity.</text>
</comment>
<comment type="subunit">
    <text evidence="2 3">Homodimer; dimerization is crucial for its function (By similarity). Oligomer (By similarity). Interacts with CALM in a calcium-dependent manner (By similarity). Interacts with TESC (By similarity). Interacts (via the juxtamembrane region of the cytoplasmic C-terminal domain) with CHP1; the interaction occurs at the plasma membrane in a calcium-dependent manner (By similarity). Interacts with CHP2; the interaction occurs in a calcium-dependent manner (By similarity). Interacts with EZR; regulates the cytoskeletal interactions of SLC9A1 and promotes stress fiber formation (By similarity).</text>
</comment>
<comment type="subcellular location">
    <subcellularLocation>
        <location evidence="2">Cell membrane</location>
        <topology evidence="2">Multi-pass membrane protein</topology>
    </subcellularLocation>
    <subcellularLocation>
        <location evidence="7">Basolateral cell membrane</location>
        <topology evidence="2">Multi-pass membrane protein</topology>
    </subcellularLocation>
</comment>
<comment type="PTM">
    <text evidence="3">Ubiquitinated, leading to its degradation by the proteasome. Ubiquitination is reduced by CHP1.</text>
</comment>
<comment type="PTM">
    <text evidence="2">O-glycosylated.</text>
</comment>
<comment type="PTM">
    <text evidence="3">Palmitoylated; may play a major role in SLC9A1 regulation.</text>
</comment>
<comment type="PTM">
    <text evidence="2">Phosphorylation at Thr-782 increases SLC9A1 activity. Specifically dephosphorylated at Thr-782 by PPP3CA that negatively regulates SLC9A1 activity. Phosphorylation at Ser-648 by AKT1 reduces SLC9A1 binding to CALM1.</text>
</comment>
<comment type="miscellaneous">
    <text evidence="2">Predicted models used for more than 20 years predicted 10-12 transmembrane segments. More recently, the structure of SLC9A1 has been solved and reveals that SLC9A1 possesses 13 transmembrane regions.</text>
</comment>
<comment type="similarity">
    <text evidence="8">Belongs to the monovalent cation:proton antiporter 1 (CPA1) transporter (TC 2.A.36) family.</text>
</comment>
<comment type="caution">
    <text evidence="8">The interacting region with TESC is conflicting: In human, it has been reported that SLC9A1 interacts with TESC via the juxtamembrane region of the cytoplasmic C-terminal domain, including residues 503-545. However, another publication has reported interaction with TESC via residues 633-818, the region of the cytoplasmic C-terminus more distal to the membrane.</text>
</comment>
<gene>
    <name type="primary">SLC9A1</name>
    <name type="synonym">NHE1</name>
</gene>
<sequence>MLLWSGICGLSPPRIFPSLLVVVALVGLLPVLRSHGLQPSPTASTIRGSEPPRERSIGDVTTAPPELAPESRPVNHSVTEHGMKARKAFPVLGIDYTHVRTPFEISLWILLACLMKIGFHVIPTISSIVPESCLLIVVGLLVGGLIKAVGETPPFLQSEVFFLFLLPPIILDAGYFLPLRQFTENLGTILIFAVVGTLWNAFFLGGLMYAVCLVGGEQINNIGLLDNLLFGSIISAVDPVAVLAVFEEIHINELLHILVFGESLLNDAVTVVLYHLFEEFANYDRVGIVDIVLGFLSFFVVSLGGVFVGVVYGVIAAFTSRFTSHIRVIEPLFVFLYSYMAYLSAELFHLSGIMALIASGVVMRPYVEANISHKSHTTIKYFLKMWSSVSETLIFIFLGVSTVAGSHHWNWTFVISTLLFCLIARVLGVLGLTWFINKFRIVKLTPKDQFIIAYGGLRGAIAFSLGHLLDKNHFPMCDLFLTAIITVIFFTVFVQGMTIRPLVDLLAVKKKQETKRSINEEIHTQFLDHLLTGIEDICGHYGHHHWKDKLNRFNKKYVKKCLIAGERSKEPQLIAFYHKMEMKQAIELVESGGMGKIPSAVSTVSMQNIHPKTLPTERILPALSKDKEEEIRKILRNNLQKTRQRLRSYNRHTLVADPYEEAWNQMLLRRQKARQLEQKINNHLTVPAHKLDSPTMSRARIGSDPLAYEPKADLPVITIDPASPQSPESVDLVNEELKGKVLGLSREPGRATEEEDDDEDHDGGLVMRTKEPSSPGTDDVFTPAPSDSPSSQRIQRCLSDPGPHPEPGEGEPFIPKGQ</sequence>
<keyword id="KW-0050">Antiport</keyword>
<keyword id="KW-0112">Calmodulin-binding</keyword>
<keyword id="KW-1003">Cell membrane</keyword>
<keyword id="KW-0325">Glycoprotein</keyword>
<keyword id="KW-0406">Ion transport</keyword>
<keyword id="KW-0449">Lipoprotein</keyword>
<keyword id="KW-0472">Membrane</keyword>
<keyword id="KW-0564">Palmitate</keyword>
<keyword id="KW-0597">Phosphoprotein</keyword>
<keyword id="KW-1185">Reference proteome</keyword>
<keyword id="KW-0915">Sodium</keyword>
<keyword id="KW-0739">Sodium transport</keyword>
<keyword id="KW-0812">Transmembrane</keyword>
<keyword id="KW-1133">Transmembrane helix</keyword>
<keyword id="KW-0813">Transport</keyword>
<keyword id="KW-0832">Ubl conjugation</keyword>
<evidence type="ECO:0000250" key="1"/>
<evidence type="ECO:0000250" key="2">
    <source>
        <dbReference type="UniProtKB" id="P19634"/>
    </source>
</evidence>
<evidence type="ECO:0000250" key="3">
    <source>
        <dbReference type="UniProtKB" id="P26431"/>
    </source>
</evidence>
<evidence type="ECO:0000250" key="4">
    <source>
        <dbReference type="UniProtKB" id="Q61165"/>
    </source>
</evidence>
<evidence type="ECO:0000255" key="5"/>
<evidence type="ECO:0000256" key="6">
    <source>
        <dbReference type="SAM" id="MobiDB-lite"/>
    </source>
</evidence>
<evidence type="ECO:0000269" key="7">
    <source>
    </source>
</evidence>
<evidence type="ECO:0000305" key="8"/>